<reference key="1">
    <citation type="journal article" date="2008" name="Proc. Natl. Acad. Sci. U.S.A.">
        <title>Niche adaptation and genome expansion in the chlorophyll d-producing cyanobacterium Acaryochloris marina.</title>
        <authorList>
            <person name="Swingley W.D."/>
            <person name="Chen M."/>
            <person name="Cheung P.C."/>
            <person name="Conrad A.L."/>
            <person name="Dejesa L.C."/>
            <person name="Hao J."/>
            <person name="Honchak B.M."/>
            <person name="Karbach L.E."/>
            <person name="Kurdoglu A."/>
            <person name="Lahiri S."/>
            <person name="Mastrian S.D."/>
            <person name="Miyashita H."/>
            <person name="Page L."/>
            <person name="Ramakrishna P."/>
            <person name="Satoh S."/>
            <person name="Sattley W.M."/>
            <person name="Shimada Y."/>
            <person name="Taylor H.L."/>
            <person name="Tomo T."/>
            <person name="Tsuchiya T."/>
            <person name="Wang Z.T."/>
            <person name="Raymond J."/>
            <person name="Mimuro M."/>
            <person name="Blankenship R.E."/>
            <person name="Touchman J.W."/>
        </authorList>
    </citation>
    <scope>NUCLEOTIDE SEQUENCE [LARGE SCALE GENOMIC DNA]</scope>
    <source>
        <strain>MBIC 11017</strain>
    </source>
</reference>
<feature type="chain" id="PRO_1000077861" description="UvrABC system protein B">
    <location>
        <begin position="1"/>
        <end position="668"/>
    </location>
</feature>
<feature type="domain" description="Helicase ATP-binding" evidence="1">
    <location>
        <begin position="25"/>
        <end position="176"/>
    </location>
</feature>
<feature type="domain" description="Helicase C-terminal" evidence="1">
    <location>
        <begin position="429"/>
        <end position="591"/>
    </location>
</feature>
<feature type="domain" description="UVR" evidence="1">
    <location>
        <begin position="626"/>
        <end position="661"/>
    </location>
</feature>
<feature type="short sequence motif" description="Beta-hairpin">
    <location>
        <begin position="91"/>
        <end position="114"/>
    </location>
</feature>
<feature type="binding site" evidence="1">
    <location>
        <begin position="38"/>
        <end position="45"/>
    </location>
    <ligand>
        <name>ATP</name>
        <dbReference type="ChEBI" id="CHEBI:30616"/>
    </ligand>
</feature>
<organism>
    <name type="scientific">Acaryochloris marina (strain MBIC 11017)</name>
    <dbReference type="NCBI Taxonomy" id="329726"/>
    <lineage>
        <taxon>Bacteria</taxon>
        <taxon>Bacillati</taxon>
        <taxon>Cyanobacteriota</taxon>
        <taxon>Cyanophyceae</taxon>
        <taxon>Acaryochloridales</taxon>
        <taxon>Acaryochloridaceae</taxon>
        <taxon>Acaryochloris</taxon>
    </lineage>
</organism>
<evidence type="ECO:0000255" key="1">
    <source>
        <dbReference type="HAMAP-Rule" id="MF_00204"/>
    </source>
</evidence>
<comment type="function">
    <text evidence="1">The UvrABC repair system catalyzes the recognition and processing of DNA lesions. A damage recognition complex composed of 2 UvrA and 2 UvrB subunits scans DNA for abnormalities. Upon binding of the UvrA(2)B(2) complex to a putative damaged site, the DNA wraps around one UvrB monomer. DNA wrap is dependent on ATP binding by UvrB and probably causes local melting of the DNA helix, facilitating insertion of UvrB beta-hairpin between the DNA strands. Then UvrB probes one DNA strand for the presence of a lesion. If a lesion is found the UvrA subunits dissociate and the UvrB-DNA preincision complex is formed. This complex is subsequently bound by UvrC and the second UvrB is released. If no lesion is found, the DNA wraps around the other UvrB subunit that will check the other stand for damage.</text>
</comment>
<comment type="subunit">
    <text evidence="1">Forms a heterotetramer with UvrA during the search for lesions. Interacts with UvrC in an incision complex.</text>
</comment>
<comment type="subcellular location">
    <subcellularLocation>
        <location evidence="1">Cytoplasm</location>
    </subcellularLocation>
</comment>
<comment type="domain">
    <text evidence="1">The beta-hairpin motif is involved in DNA binding.</text>
</comment>
<comment type="similarity">
    <text evidence="1">Belongs to the UvrB family.</text>
</comment>
<accession>B0CE09</accession>
<gene>
    <name evidence="1" type="primary">uvrB</name>
    <name type="ordered locus">AM1_5529</name>
</gene>
<sequence>MTAFDLHAPFVPKGDQPQAIEKLTTHLQSGHSRQTLLGATGTGKTFTMAKVIEEIGKPTLILAHNKTLAAQLCNEIRSFFPNNAVEYFISYYDYYQPEAYIPVTDTFIEKTASINEEIDMLRHSATRSLFERQDVIVVASISCIYGLGIPAEYLKASIPLKVGAEVDQRQLLRNLAAVQYTRNDVDLGRGRFRVKGDVLEIGPAYEDRIIRVEFFGDEIDAIRYVDPVTGETLQSLEGLNVYPARHFVTPTERLEMAVEAIDAERTAQVEHLEGAGKLLEAQRLNQRTRYDLEMLREVGYCNGVENYSRHLAGRQAGEPPECLVDYFPKDWLLIVDESHVTVPQIRGMYNGDQARKKVLIDHGFRLPSAADNRPLKSEEFWQKVGQCVFVSATPGLWEIELSENRVVEQVIRPTGVVDPEIFVRPTTGQVDDLLAEIQERVGRQERTLITTLTKRMAEDLTEYFEERGVRVRYLHSEINAIQRIEILRDLREGVFDVLIGVNLLREGLDLPEVSLVAILDADKEGFLRAERSLIQTIGRAARHVRGQAILYADNLTDSMEKAISETERRRKIQLAYNKKHGITPQPVKKGSDNAILAFLEVSRRLNTQELEDAYEQADDLPLESVPELITQLEAQMKEAAKNLEFEEAAKYRDRIKNLRSKLLGQQSP</sequence>
<keyword id="KW-0067">ATP-binding</keyword>
<keyword id="KW-0963">Cytoplasm</keyword>
<keyword id="KW-0227">DNA damage</keyword>
<keyword id="KW-0228">DNA excision</keyword>
<keyword id="KW-0234">DNA repair</keyword>
<keyword id="KW-0267">Excision nuclease</keyword>
<keyword id="KW-0347">Helicase</keyword>
<keyword id="KW-0378">Hydrolase</keyword>
<keyword id="KW-0547">Nucleotide-binding</keyword>
<keyword id="KW-1185">Reference proteome</keyword>
<keyword id="KW-0742">SOS response</keyword>
<proteinExistence type="inferred from homology"/>
<name>UVRB_ACAM1</name>
<protein>
    <recommendedName>
        <fullName evidence="1">UvrABC system protein B</fullName>
        <shortName evidence="1">Protein UvrB</shortName>
    </recommendedName>
    <alternativeName>
        <fullName evidence="1">Excinuclease ABC subunit B</fullName>
    </alternativeName>
</protein>
<dbReference type="EMBL" id="CP000828">
    <property type="protein sequence ID" value="ABW30483.1"/>
    <property type="molecule type" value="Genomic_DNA"/>
</dbReference>
<dbReference type="RefSeq" id="WP_012165712.1">
    <property type="nucleotide sequence ID" value="NC_009925.1"/>
</dbReference>
<dbReference type="SMR" id="B0CE09"/>
<dbReference type="STRING" id="329726.AM1_5529"/>
<dbReference type="KEGG" id="amr:AM1_5529"/>
<dbReference type="eggNOG" id="COG0556">
    <property type="taxonomic scope" value="Bacteria"/>
</dbReference>
<dbReference type="HOGENOM" id="CLU_009621_2_1_3"/>
<dbReference type="OrthoDB" id="9806651at2"/>
<dbReference type="Proteomes" id="UP000000268">
    <property type="component" value="Chromosome"/>
</dbReference>
<dbReference type="GO" id="GO:0005737">
    <property type="term" value="C:cytoplasm"/>
    <property type="evidence" value="ECO:0007669"/>
    <property type="project" value="UniProtKB-SubCell"/>
</dbReference>
<dbReference type="GO" id="GO:0009380">
    <property type="term" value="C:excinuclease repair complex"/>
    <property type="evidence" value="ECO:0007669"/>
    <property type="project" value="InterPro"/>
</dbReference>
<dbReference type="GO" id="GO:0005524">
    <property type="term" value="F:ATP binding"/>
    <property type="evidence" value="ECO:0007669"/>
    <property type="project" value="UniProtKB-UniRule"/>
</dbReference>
<dbReference type="GO" id="GO:0016887">
    <property type="term" value="F:ATP hydrolysis activity"/>
    <property type="evidence" value="ECO:0007669"/>
    <property type="project" value="InterPro"/>
</dbReference>
<dbReference type="GO" id="GO:0003677">
    <property type="term" value="F:DNA binding"/>
    <property type="evidence" value="ECO:0007669"/>
    <property type="project" value="UniProtKB-UniRule"/>
</dbReference>
<dbReference type="GO" id="GO:0009381">
    <property type="term" value="F:excinuclease ABC activity"/>
    <property type="evidence" value="ECO:0007669"/>
    <property type="project" value="UniProtKB-UniRule"/>
</dbReference>
<dbReference type="GO" id="GO:0004386">
    <property type="term" value="F:helicase activity"/>
    <property type="evidence" value="ECO:0007669"/>
    <property type="project" value="UniProtKB-KW"/>
</dbReference>
<dbReference type="GO" id="GO:0006289">
    <property type="term" value="P:nucleotide-excision repair"/>
    <property type="evidence" value="ECO:0007669"/>
    <property type="project" value="UniProtKB-UniRule"/>
</dbReference>
<dbReference type="GO" id="GO:0009432">
    <property type="term" value="P:SOS response"/>
    <property type="evidence" value="ECO:0007669"/>
    <property type="project" value="UniProtKB-UniRule"/>
</dbReference>
<dbReference type="CDD" id="cd17916">
    <property type="entry name" value="DEXHc_UvrB"/>
    <property type="match status" value="1"/>
</dbReference>
<dbReference type="CDD" id="cd18790">
    <property type="entry name" value="SF2_C_UvrB"/>
    <property type="match status" value="1"/>
</dbReference>
<dbReference type="Gene3D" id="3.40.50.300">
    <property type="entry name" value="P-loop containing nucleotide triphosphate hydrolases"/>
    <property type="match status" value="3"/>
</dbReference>
<dbReference type="Gene3D" id="4.10.860.10">
    <property type="entry name" value="UVR domain"/>
    <property type="match status" value="1"/>
</dbReference>
<dbReference type="HAMAP" id="MF_00204">
    <property type="entry name" value="UvrB"/>
    <property type="match status" value="1"/>
</dbReference>
<dbReference type="InterPro" id="IPR006935">
    <property type="entry name" value="Helicase/UvrB_N"/>
</dbReference>
<dbReference type="InterPro" id="IPR014001">
    <property type="entry name" value="Helicase_ATP-bd"/>
</dbReference>
<dbReference type="InterPro" id="IPR001650">
    <property type="entry name" value="Helicase_C-like"/>
</dbReference>
<dbReference type="InterPro" id="IPR027417">
    <property type="entry name" value="P-loop_NTPase"/>
</dbReference>
<dbReference type="InterPro" id="IPR001943">
    <property type="entry name" value="UVR_dom"/>
</dbReference>
<dbReference type="InterPro" id="IPR036876">
    <property type="entry name" value="UVR_dom_sf"/>
</dbReference>
<dbReference type="InterPro" id="IPR004807">
    <property type="entry name" value="UvrB"/>
</dbReference>
<dbReference type="InterPro" id="IPR041471">
    <property type="entry name" value="UvrB_inter"/>
</dbReference>
<dbReference type="InterPro" id="IPR024759">
    <property type="entry name" value="UvrB_YAD/RRR_dom"/>
</dbReference>
<dbReference type="NCBIfam" id="NF003673">
    <property type="entry name" value="PRK05298.1"/>
    <property type="match status" value="1"/>
</dbReference>
<dbReference type="NCBIfam" id="TIGR00631">
    <property type="entry name" value="uvrb"/>
    <property type="match status" value="1"/>
</dbReference>
<dbReference type="PANTHER" id="PTHR24029">
    <property type="entry name" value="UVRABC SYSTEM PROTEIN B"/>
    <property type="match status" value="1"/>
</dbReference>
<dbReference type="PANTHER" id="PTHR24029:SF0">
    <property type="entry name" value="UVRABC SYSTEM PROTEIN B"/>
    <property type="match status" value="1"/>
</dbReference>
<dbReference type="Pfam" id="PF00271">
    <property type="entry name" value="Helicase_C"/>
    <property type="match status" value="1"/>
</dbReference>
<dbReference type="Pfam" id="PF04851">
    <property type="entry name" value="ResIII"/>
    <property type="match status" value="1"/>
</dbReference>
<dbReference type="Pfam" id="PF02151">
    <property type="entry name" value="UVR"/>
    <property type="match status" value="1"/>
</dbReference>
<dbReference type="Pfam" id="PF12344">
    <property type="entry name" value="UvrB"/>
    <property type="match status" value="1"/>
</dbReference>
<dbReference type="Pfam" id="PF17757">
    <property type="entry name" value="UvrB_inter"/>
    <property type="match status" value="1"/>
</dbReference>
<dbReference type="SMART" id="SM00487">
    <property type="entry name" value="DEXDc"/>
    <property type="match status" value="1"/>
</dbReference>
<dbReference type="SMART" id="SM00490">
    <property type="entry name" value="HELICc"/>
    <property type="match status" value="1"/>
</dbReference>
<dbReference type="SUPFAM" id="SSF46600">
    <property type="entry name" value="C-terminal UvrC-binding domain of UvrB"/>
    <property type="match status" value="1"/>
</dbReference>
<dbReference type="SUPFAM" id="SSF52540">
    <property type="entry name" value="P-loop containing nucleoside triphosphate hydrolases"/>
    <property type="match status" value="2"/>
</dbReference>
<dbReference type="PROSITE" id="PS51192">
    <property type="entry name" value="HELICASE_ATP_BIND_1"/>
    <property type="match status" value="1"/>
</dbReference>
<dbReference type="PROSITE" id="PS51194">
    <property type="entry name" value="HELICASE_CTER"/>
    <property type="match status" value="1"/>
</dbReference>
<dbReference type="PROSITE" id="PS50151">
    <property type="entry name" value="UVR"/>
    <property type="match status" value="1"/>
</dbReference>